<keyword id="KW-0002">3D-structure</keyword>
<keyword id="KW-0012">Acyltransferase</keyword>
<keyword id="KW-0067">ATP-binding</keyword>
<keyword id="KW-0963">Cytoplasm</keyword>
<keyword id="KW-0547">Nucleotide-binding</keyword>
<keyword id="KW-1185">Reference proteome</keyword>
<keyword id="KW-0694">RNA-binding</keyword>
<keyword id="KW-0808">Transferase</keyword>
<keyword id="KW-0819">tRNA processing</keyword>
<keyword id="KW-0820">tRNA-binding</keyword>
<reference key="1">
    <citation type="journal article" date="1997" name="DNA Res.">
        <title>Construction of a contiguous 874-kb sequence of the Escherichia coli-K12 genome corresponding to 50.0-68.8 min on the linkage map and analysis of its sequence features.</title>
        <authorList>
            <person name="Yamamoto Y."/>
            <person name="Aiba H."/>
            <person name="Baba T."/>
            <person name="Hayashi K."/>
            <person name="Inada T."/>
            <person name="Isono K."/>
            <person name="Itoh T."/>
            <person name="Kimura S."/>
            <person name="Kitagawa M."/>
            <person name="Makino K."/>
            <person name="Miki T."/>
            <person name="Mitsuhashi N."/>
            <person name="Mizobuchi K."/>
            <person name="Mori H."/>
            <person name="Nakade S."/>
            <person name="Nakamura Y."/>
            <person name="Nashimoto H."/>
            <person name="Oshima T."/>
            <person name="Oyama S."/>
            <person name="Saito N."/>
            <person name="Sampei G."/>
            <person name="Satoh Y."/>
            <person name="Sivasundaram S."/>
            <person name="Tagami H."/>
            <person name="Takahashi H."/>
            <person name="Takeda J."/>
            <person name="Takemoto K."/>
            <person name="Uehara K."/>
            <person name="Wada C."/>
            <person name="Yamagata S."/>
            <person name="Horiuchi T."/>
        </authorList>
    </citation>
    <scope>NUCLEOTIDE SEQUENCE [LARGE SCALE GENOMIC DNA]</scope>
    <source>
        <strain>K12 / W3110 / ATCC 27325 / DSM 5911</strain>
    </source>
</reference>
<reference key="2">
    <citation type="journal article" date="1997" name="Science">
        <title>The complete genome sequence of Escherichia coli K-12.</title>
        <authorList>
            <person name="Blattner F.R."/>
            <person name="Plunkett G. III"/>
            <person name="Bloch C.A."/>
            <person name="Perna N.T."/>
            <person name="Burland V."/>
            <person name="Riley M."/>
            <person name="Collado-Vides J."/>
            <person name="Glasner J.D."/>
            <person name="Rode C.K."/>
            <person name="Mayhew G.F."/>
            <person name="Gregor J."/>
            <person name="Davis N.W."/>
            <person name="Kirkpatrick H.A."/>
            <person name="Goeden M.A."/>
            <person name="Rose D.J."/>
            <person name="Mau B."/>
            <person name="Shao Y."/>
        </authorList>
    </citation>
    <scope>NUCLEOTIDE SEQUENCE [LARGE SCALE GENOMIC DNA]</scope>
    <source>
        <strain>K12 / MG1655 / ATCC 47076</strain>
    </source>
</reference>
<reference key="3">
    <citation type="journal article" date="2006" name="Mol. Syst. Biol.">
        <title>Highly accurate genome sequences of Escherichia coli K-12 strains MG1655 and W3110.</title>
        <authorList>
            <person name="Hayashi K."/>
            <person name="Morooka N."/>
            <person name="Yamamoto Y."/>
            <person name="Fujita K."/>
            <person name="Isono K."/>
            <person name="Choi S."/>
            <person name="Ohtsubo E."/>
            <person name="Baba T."/>
            <person name="Wanner B.L."/>
            <person name="Mori H."/>
            <person name="Horiuchi T."/>
        </authorList>
    </citation>
    <scope>NUCLEOTIDE SEQUENCE [LARGE SCALE GENOMIC DNA]</scope>
    <scope>SEQUENCE REVISION TO 646-671</scope>
    <source>
        <strain>K12 / W3110 / ATCC 27325 / DSM 5911</strain>
    </source>
</reference>
<reference key="4">
    <citation type="journal article" date="2008" name="EMBO J.">
        <title>The RNA acetyltransferase driven by ATP hydrolysis synthesizes N4-acetylcytidine of tRNA anticodon.</title>
        <authorList>
            <person name="Ikeuchi Y."/>
            <person name="Kitahara K."/>
            <person name="Suzuki T."/>
        </authorList>
    </citation>
    <scope>FUNCTION</scope>
    <scope>CATALYTIC ACTIVITY</scope>
    <scope>ACTIVITY REGULATION</scope>
    <scope>BIOPHYSICOCHEMICAL PROPERTIES</scope>
    <scope>DISRUPTION PHENOTYPE</scope>
    <source>
        <strain>K12 / MG1655 / ATCC 47076</strain>
    </source>
</reference>
<reference key="5">
    <citation type="journal article" date="2022" name="Nat. Chem. Biol.">
        <title>TmcA functions as a lysine 2-hydroxyisobutyryltransferase to regulate transcription.</title>
        <authorList>
            <person name="Dong H."/>
            <person name="Zhao Y."/>
            <person name="Bi C."/>
            <person name="Han Y."/>
            <person name="Zhang J."/>
            <person name="Bai X."/>
            <person name="Zhai G."/>
            <person name="Zhang H."/>
            <person name="Tian S."/>
            <person name="Hu D."/>
            <person name="Xu L."/>
            <person name="Zhang K."/>
        </authorList>
    </citation>
    <scope>FUNCTION</scope>
    <scope>CATALYTIC ACTIVITY</scope>
    <scope>ACTIVITY REGULATION</scope>
    <scope>DISRUPTION PHENOTYPE</scope>
    <scope>MUTAGENESIS OF ARG-319; VAL-463; ARG-469; GLY-471; ARG-502 AND TRP-504</scope>
    <source>
        <strain>K12 / MG1655 / ATCC 47076</strain>
    </source>
</reference>
<reference key="6">
    <citation type="journal article" date="2009" name="EMBO J.">
        <title>RNA helicase module in an acetyltransferase that modifies a specific tRNA anticodon.</title>
        <authorList>
            <person name="Chimnaronk S."/>
            <person name="Suzuki T."/>
            <person name="Manita T."/>
            <person name="Ikeuchi Y."/>
            <person name="Yao M."/>
            <person name="Suzuki T."/>
            <person name="Tanaka I."/>
        </authorList>
    </citation>
    <scope>X-RAY CRYSTALLOGRAPHY (2.35 ANGSTROMS) IN COMPLEX WITH ACETYL-COA AND THE ATP ANALOG ADP</scope>
    <scope>FUNCTION</scope>
    <scope>CATALYTIC ACTIVITY</scope>
    <scope>ACTIVITY REGULATION</scope>
    <scope>MUTAGENESIS OF THR-287; TYR-291; GLU-292; ARG-296; LYS-301; ARG-319; GLU-327; HIS-377; ARG-387 AND ARG-460</scope>
</reference>
<proteinExistence type="evidence at protein level"/>
<feature type="chain" id="PRO_0000169239" description="tRNA(Met) cytidine acetyltransferase TmcA">
    <location>
        <begin position="1"/>
        <end position="671"/>
    </location>
</feature>
<feature type="domain" description="N-acetyltransferase" evidence="1">
    <location>
        <begin position="356"/>
        <end position="531"/>
    </location>
</feature>
<feature type="binding site" evidence="1 3">
    <location>
        <position position="180"/>
    </location>
    <ligand>
        <name>ATP</name>
        <dbReference type="ChEBI" id="CHEBI:30616"/>
    </ligand>
</feature>
<feature type="binding site" evidence="1 3">
    <location>
        <begin position="202"/>
        <end position="211"/>
    </location>
    <ligand>
        <name>ATP</name>
        <dbReference type="ChEBI" id="CHEBI:30616"/>
    </ligand>
</feature>
<feature type="binding site" evidence="1 3">
    <location>
        <position position="319"/>
    </location>
    <ligand>
        <name>ATP</name>
        <dbReference type="ChEBI" id="CHEBI:30616"/>
    </ligand>
</feature>
<feature type="binding site" evidence="1 3">
    <location>
        <begin position="461"/>
        <end position="463"/>
    </location>
    <ligand>
        <name>acetyl-CoA</name>
        <dbReference type="ChEBI" id="CHEBI:57288"/>
    </ligand>
</feature>
<feature type="binding site" evidence="1 3">
    <location>
        <begin position="468"/>
        <end position="474"/>
    </location>
    <ligand>
        <name>acetyl-CoA</name>
        <dbReference type="ChEBI" id="CHEBI:57288"/>
    </ligand>
</feature>
<feature type="binding site" evidence="1 3">
    <location>
        <position position="499"/>
    </location>
    <ligand>
        <name>acetyl-CoA</name>
        <dbReference type="ChEBI" id="CHEBI:57288"/>
    </ligand>
</feature>
<feature type="binding site" evidence="1 3">
    <location>
        <position position="506"/>
    </location>
    <ligand>
        <name>acetyl-CoA</name>
        <dbReference type="ChEBI" id="CHEBI:57288"/>
    </ligand>
</feature>
<feature type="site" description="Important for lysine 2-hydroxyisobutyryltransferase activity" evidence="7">
    <location>
        <position position="502"/>
    </location>
</feature>
<feature type="mutagenesis site" description="Loss of ATPase activity, but no change in tRNA-binding." evidence="3">
    <original>T</original>
    <variation>A</variation>
    <location>
        <position position="287"/>
    </location>
</feature>
<feature type="mutagenesis site" description="Loss of ATPase activity, but no change in tRNA-binding." evidence="3">
    <original>Y</original>
    <variation>A</variation>
    <location>
        <position position="291"/>
    </location>
</feature>
<feature type="mutagenesis site" description="Loss of ATPase activity, but no change in tRNA-binding." evidence="3">
    <original>E</original>
    <variation>A</variation>
    <location>
        <position position="292"/>
    </location>
</feature>
<feature type="mutagenesis site" description="Decrease in ATPase activity and loss of tRNA-binding." evidence="3">
    <original>R</original>
    <variation>A</variation>
    <location>
        <position position="296"/>
    </location>
</feature>
<feature type="mutagenesis site" description="Decrease in ATPase activity and loss of tRNA-binding." evidence="3">
    <original>K</original>
    <variation>A</variation>
    <location>
        <position position="301"/>
    </location>
</feature>
<feature type="mutagenesis site" description="Loss of ATPase activity, but no change in tRNA-binding. Lack of hydroxyisobutyrylation activity." evidence="3 4">
    <original>R</original>
    <variation>A</variation>
    <location>
        <position position="319"/>
    </location>
</feature>
<feature type="mutagenesis site" description="Loss of ATPase activity, but no change in tRNA-binding." evidence="3">
    <original>E</original>
    <variation>A</variation>
    <location>
        <position position="327"/>
    </location>
</feature>
<feature type="mutagenesis site" description="Decrease in ATPase activity and loss of tRNA-binding." evidence="3">
    <original>H</original>
    <variation>A</variation>
    <location>
        <position position="377"/>
    </location>
</feature>
<feature type="mutagenesis site" description="Abolishes the tRNA-binding capacity, but no loss of activity." evidence="3">
    <original>R</original>
    <variation>A</variation>
    <location>
        <position position="387"/>
    </location>
</feature>
<feature type="mutagenesis site" description="Loss of tRNA-binding." evidence="3">
    <original>R</original>
    <variation>A</variation>
    <location>
        <position position="460"/>
    </location>
</feature>
<feature type="mutagenesis site" description="Does not affect hydroxyisobutyrylation activity." evidence="4">
    <original>V</original>
    <variation>A</variation>
    <location>
        <position position="463"/>
    </location>
</feature>
<feature type="mutagenesis site" description="Does not affect hydroxyisobutyrylation activity." evidence="4">
    <original>R</original>
    <variation>A</variation>
    <location>
        <position position="469"/>
    </location>
</feature>
<feature type="mutagenesis site" description="Does not affect hydroxyisobutyrylation activity." evidence="4">
    <original>G</original>
    <variation>A</variation>
    <location>
        <position position="471"/>
    </location>
</feature>
<feature type="mutagenesis site" description="Lack of hydroxyisobutyrylation activity. Has little effect on RNA acetylation activity. Alters binding with hydroxyisobutanoyl-CoA, but not with acetyl-CoA." evidence="4">
    <original>R</original>
    <variation>A</variation>
    <location>
        <position position="502"/>
    </location>
</feature>
<feature type="mutagenesis site" description="Does not affect hydroxyisobutyrylation activity. No change in acetyl-CoA or hydroxyisobutanoyl-CoA binding." evidence="4">
    <original>W</original>
    <variation>A</variation>
    <location>
        <position position="504"/>
    </location>
</feature>
<feature type="helix" evidence="8">
    <location>
        <begin position="3"/>
        <end position="17"/>
    </location>
</feature>
<feature type="strand" evidence="8">
    <location>
        <begin position="21"/>
        <end position="27"/>
    </location>
</feature>
<feature type="helix" evidence="8">
    <location>
        <begin position="29"/>
        <end position="42"/>
    </location>
</feature>
<feature type="strand" evidence="8">
    <location>
        <begin position="48"/>
        <end position="50"/>
    </location>
</feature>
<feature type="turn" evidence="8">
    <location>
        <begin position="68"/>
        <end position="70"/>
    </location>
</feature>
<feature type="strand" evidence="8">
    <location>
        <begin position="73"/>
        <end position="79"/>
    </location>
</feature>
<feature type="helix" evidence="8">
    <location>
        <begin position="86"/>
        <end position="93"/>
    </location>
</feature>
<feature type="strand" evidence="8">
    <location>
        <begin position="101"/>
        <end position="107"/>
    </location>
</feature>
<feature type="helix" evidence="8">
    <location>
        <begin position="109"/>
        <end position="111"/>
    </location>
</feature>
<feature type="turn" evidence="8">
    <location>
        <begin position="112"/>
        <end position="114"/>
    </location>
</feature>
<feature type="helix" evidence="8">
    <location>
        <begin position="118"/>
        <end position="120"/>
    </location>
</feature>
<feature type="helix" evidence="8">
    <location>
        <begin position="121"/>
        <end position="124"/>
    </location>
</feature>
<feature type="helix" evidence="8">
    <location>
        <begin position="133"/>
        <end position="143"/>
    </location>
</feature>
<feature type="strand" evidence="8">
    <location>
        <begin position="145"/>
        <end position="153"/>
    </location>
</feature>
<feature type="helix" evidence="8">
    <location>
        <begin position="178"/>
        <end position="187"/>
    </location>
</feature>
<feature type="strand" evidence="8">
    <location>
        <begin position="192"/>
        <end position="199"/>
    </location>
</feature>
<feature type="helix" evidence="8">
    <location>
        <begin position="205"/>
        <end position="215"/>
    </location>
</feature>
<feature type="strand" evidence="8">
    <location>
        <begin position="216"/>
        <end position="218"/>
    </location>
</feature>
<feature type="strand" evidence="8">
    <location>
        <begin position="220"/>
        <end position="223"/>
    </location>
</feature>
<feature type="helix" evidence="8">
    <location>
        <begin position="231"/>
        <end position="237"/>
    </location>
</feature>
<feature type="helix" evidence="8">
    <location>
        <begin position="238"/>
        <end position="240"/>
    </location>
</feature>
<feature type="helix" evidence="8">
    <location>
        <begin position="246"/>
        <end position="251"/>
    </location>
</feature>
<feature type="strand" evidence="8">
    <location>
        <begin position="257"/>
        <end position="262"/>
    </location>
</feature>
<feature type="helix" evidence="8">
    <location>
        <begin position="264"/>
        <end position="266"/>
    </location>
</feature>
<feature type="helix" evidence="8">
    <location>
        <begin position="269"/>
        <end position="276"/>
    </location>
</feature>
<feature type="strand" evidence="8">
    <location>
        <begin position="279"/>
        <end position="290"/>
    </location>
</feature>
<feature type="helix" evidence="8">
    <location>
        <begin position="296"/>
        <end position="304"/>
    </location>
</feature>
<feature type="strand" evidence="8">
    <location>
        <begin position="310"/>
        <end position="313"/>
    </location>
</feature>
<feature type="strand" evidence="8">
    <location>
        <begin position="318"/>
        <end position="320"/>
    </location>
</feature>
<feature type="helix" evidence="8">
    <location>
        <begin position="325"/>
        <end position="333"/>
    </location>
</feature>
<feature type="helix" evidence="8">
    <location>
        <begin position="339"/>
        <end position="342"/>
    </location>
</feature>
<feature type="strand" evidence="8">
    <location>
        <begin position="350"/>
        <end position="355"/>
    </location>
</feature>
<feature type="helix" evidence="8">
    <location>
        <begin position="358"/>
        <end position="361"/>
    </location>
</feature>
<feature type="helix" evidence="8">
    <location>
        <begin position="364"/>
        <end position="376"/>
    </location>
</feature>
<feature type="strand" evidence="8">
    <location>
        <begin position="377"/>
        <end position="380"/>
    </location>
</feature>
<feature type="helix" evidence="8">
    <location>
        <begin position="382"/>
        <end position="390"/>
    </location>
</feature>
<feature type="strand" evidence="8">
    <location>
        <begin position="394"/>
        <end position="400"/>
    </location>
</feature>
<feature type="strand" evidence="8">
    <location>
        <begin position="402"/>
        <end position="415"/>
    </location>
</feature>
<feature type="helix" evidence="8">
    <location>
        <begin position="419"/>
        <end position="426"/>
    </location>
</feature>
<feature type="helix" evidence="8">
    <location>
        <begin position="436"/>
        <end position="444"/>
    </location>
</feature>
<feature type="helix" evidence="8">
    <location>
        <begin position="450"/>
        <end position="452"/>
    </location>
</feature>
<feature type="strand" evidence="8">
    <location>
        <begin position="453"/>
        <end position="463"/>
    </location>
</feature>
<feature type="strand" evidence="8">
    <location>
        <begin position="469"/>
        <end position="471"/>
    </location>
</feature>
<feature type="helix" evidence="8">
    <location>
        <begin position="472"/>
        <end position="482"/>
    </location>
</feature>
<feature type="strand" evidence="8">
    <location>
        <begin position="488"/>
        <end position="495"/>
    </location>
</feature>
<feature type="helix" evidence="8">
    <location>
        <begin position="498"/>
        <end position="506"/>
    </location>
</feature>
<feature type="strand" evidence="8">
    <location>
        <begin position="510"/>
        <end position="514"/>
    </location>
</feature>
<feature type="turn" evidence="8">
    <location>
        <begin position="520"/>
        <end position="522"/>
    </location>
</feature>
<feature type="strand" evidence="8">
    <location>
        <begin position="526"/>
        <end position="532"/>
    </location>
</feature>
<feature type="helix" evidence="8">
    <location>
        <begin position="535"/>
        <end position="559"/>
    </location>
</feature>
<feature type="helix" evidence="8">
    <location>
        <begin position="575"/>
        <end position="586"/>
    </location>
</feature>
<feature type="turn" evidence="8">
    <location>
        <begin position="591"/>
        <end position="594"/>
    </location>
</feature>
<feature type="helix" evidence="8">
    <location>
        <begin position="595"/>
        <end position="604"/>
    </location>
</feature>
<feature type="helix" evidence="8">
    <location>
        <begin position="610"/>
        <end position="617"/>
    </location>
</feature>
<feature type="helix" evidence="8">
    <location>
        <begin position="622"/>
        <end position="628"/>
    </location>
</feature>
<feature type="helix" evidence="8">
    <location>
        <begin position="634"/>
        <end position="650"/>
    </location>
</feature>
<feature type="helix" evidence="8">
    <location>
        <begin position="654"/>
        <end position="666"/>
    </location>
</feature>
<gene>
    <name evidence="1" type="primary">tmcA</name>
    <name type="synonym">ypfI</name>
    <name type="ordered locus">b2474</name>
    <name type="ordered locus">JW2459</name>
</gene>
<evidence type="ECO:0000255" key="1">
    <source>
        <dbReference type="HAMAP-Rule" id="MF_01886"/>
    </source>
</evidence>
<evidence type="ECO:0000269" key="2">
    <source>
    </source>
</evidence>
<evidence type="ECO:0000269" key="3">
    <source>
    </source>
</evidence>
<evidence type="ECO:0000269" key="4">
    <source>
    </source>
</evidence>
<evidence type="ECO:0000303" key="5">
    <source>
    </source>
</evidence>
<evidence type="ECO:0000305" key="6">
    <source>
    </source>
</evidence>
<evidence type="ECO:0000305" key="7">
    <source>
    </source>
</evidence>
<evidence type="ECO:0007829" key="8">
    <source>
        <dbReference type="PDB" id="2ZPA"/>
    </source>
</evidence>
<protein>
    <recommendedName>
        <fullName evidence="1">tRNA(Met) cytidine acetyltransferase TmcA</fullName>
        <ecNumber evidence="1">2.3.1.193</ecNumber>
    </recommendedName>
    <alternativeName>
        <fullName evidence="5">Lysine 2-hydroxyisobutyryltransferase</fullName>
        <ecNumber evidence="4">2.3.1.-</ecNumber>
    </alternativeName>
</protein>
<name>TMCA_ECOLI</name>
<accession>P76562</accession>
<accession>P76972</accession>
<dbReference type="EC" id="2.3.1.193" evidence="1"/>
<dbReference type="EC" id="2.3.1.-" evidence="4"/>
<dbReference type="EMBL" id="U00096">
    <property type="protein sequence ID" value="AAC75527.1"/>
    <property type="molecule type" value="Genomic_DNA"/>
</dbReference>
<dbReference type="EMBL" id="AP009048">
    <property type="protein sequence ID" value="BAA16352.2"/>
    <property type="molecule type" value="Genomic_DNA"/>
</dbReference>
<dbReference type="PIR" id="A65023">
    <property type="entry name" value="A65023"/>
</dbReference>
<dbReference type="RefSeq" id="NP_416969.1">
    <property type="nucleotide sequence ID" value="NC_000913.3"/>
</dbReference>
<dbReference type="RefSeq" id="WP_000829360.1">
    <property type="nucleotide sequence ID" value="NZ_LN832404.1"/>
</dbReference>
<dbReference type="PDB" id="2ZPA">
    <property type="method" value="X-ray"/>
    <property type="resolution" value="2.35 A"/>
    <property type="chains" value="A/B=1-671"/>
</dbReference>
<dbReference type="PDBsum" id="2ZPA"/>
<dbReference type="SMR" id="P76562"/>
<dbReference type="BioGRID" id="4259195">
    <property type="interactions" value="29"/>
</dbReference>
<dbReference type="DIP" id="DIP-12825N"/>
<dbReference type="FunCoup" id="P76562">
    <property type="interactions" value="31"/>
</dbReference>
<dbReference type="IntAct" id="P76562">
    <property type="interactions" value="8"/>
</dbReference>
<dbReference type="STRING" id="511145.b2474"/>
<dbReference type="PaxDb" id="511145-b2474"/>
<dbReference type="EnsemblBacteria" id="AAC75527">
    <property type="protein sequence ID" value="AAC75527"/>
    <property type="gene ID" value="b2474"/>
</dbReference>
<dbReference type="GeneID" id="946053"/>
<dbReference type="KEGG" id="ecj:JW2459"/>
<dbReference type="KEGG" id="eco:b2474"/>
<dbReference type="KEGG" id="ecoc:C3026_13730"/>
<dbReference type="PATRIC" id="fig|1411691.4.peg.4265"/>
<dbReference type="EchoBASE" id="EB3948"/>
<dbReference type="eggNOG" id="COG1444">
    <property type="taxonomic scope" value="Bacteria"/>
</dbReference>
<dbReference type="HOGENOM" id="CLU_004652_1_1_6"/>
<dbReference type="InParanoid" id="P76562"/>
<dbReference type="OMA" id="HYRTEPN"/>
<dbReference type="OrthoDB" id="5578851at2"/>
<dbReference type="PhylomeDB" id="P76562"/>
<dbReference type="BioCyc" id="EcoCyc:G7297-MONOMER"/>
<dbReference type="BioCyc" id="MetaCyc:G7297-MONOMER"/>
<dbReference type="BRENDA" id="2.3.1.193">
    <property type="organism ID" value="2026"/>
</dbReference>
<dbReference type="SABIO-RK" id="P76562"/>
<dbReference type="EvolutionaryTrace" id="P76562"/>
<dbReference type="PRO" id="PR:P76562"/>
<dbReference type="Proteomes" id="UP000000625">
    <property type="component" value="Chromosome"/>
</dbReference>
<dbReference type="GO" id="GO:0005737">
    <property type="term" value="C:cytoplasm"/>
    <property type="evidence" value="ECO:0007669"/>
    <property type="project" value="UniProtKB-SubCell"/>
</dbReference>
<dbReference type="GO" id="GO:1990883">
    <property type="term" value="F:18S rRNA cytidine N-acetyltransferase activity"/>
    <property type="evidence" value="ECO:0000318"/>
    <property type="project" value="GO_Central"/>
</dbReference>
<dbReference type="GO" id="GO:0016747">
    <property type="term" value="F:acyltransferase activity, transferring groups other than amino-acyl groups"/>
    <property type="evidence" value="ECO:0000314"/>
    <property type="project" value="EcoCyc"/>
</dbReference>
<dbReference type="GO" id="GO:0005524">
    <property type="term" value="F:ATP binding"/>
    <property type="evidence" value="ECO:0007669"/>
    <property type="project" value="UniProtKB-UniRule"/>
</dbReference>
<dbReference type="GO" id="GO:0106226">
    <property type="term" value="F:peptide 2-hydroxyisobutyryltransferase activity"/>
    <property type="evidence" value="ECO:0007669"/>
    <property type="project" value="RHEA"/>
</dbReference>
<dbReference type="GO" id="GO:0000049">
    <property type="term" value="F:tRNA binding"/>
    <property type="evidence" value="ECO:0000314"/>
    <property type="project" value="EcoCyc"/>
</dbReference>
<dbReference type="GO" id="GO:0051392">
    <property type="term" value="F:tRNA N4-acetyltransferase activity"/>
    <property type="evidence" value="ECO:0000314"/>
    <property type="project" value="EcoCyc"/>
</dbReference>
<dbReference type="GO" id="GO:1904812">
    <property type="term" value="P:rRNA acetylation involved in maturation of SSU-rRNA"/>
    <property type="evidence" value="ECO:0000318"/>
    <property type="project" value="GO_Central"/>
</dbReference>
<dbReference type="GO" id="GO:0051391">
    <property type="term" value="P:tRNA acetylation"/>
    <property type="evidence" value="ECO:0000315"/>
    <property type="project" value="EcoCyc"/>
</dbReference>
<dbReference type="GO" id="GO:0002101">
    <property type="term" value="P:tRNA wobble cytosine modification"/>
    <property type="evidence" value="ECO:0000315"/>
    <property type="project" value="EcoCyc"/>
</dbReference>
<dbReference type="FunFam" id="1.20.120.890:FF:000001">
    <property type="entry name" value="tRNA(Met) cytidine acetyltransferase TmcA"/>
    <property type="match status" value="1"/>
</dbReference>
<dbReference type="FunFam" id="3.40.50.11040:FF:000003">
    <property type="entry name" value="tRNA(Met) cytidine acetyltransferase TmcA"/>
    <property type="match status" value="1"/>
</dbReference>
<dbReference type="FunFam" id="3.40.50.300:FF:001011">
    <property type="entry name" value="tRNA(Met) cytidine acetyltransferase TmcA"/>
    <property type="match status" value="1"/>
</dbReference>
<dbReference type="FunFam" id="3.40.630.30:FF:000054">
    <property type="entry name" value="tRNA(Met) cytidine acetyltransferase TmcA"/>
    <property type="match status" value="1"/>
</dbReference>
<dbReference type="Gene3D" id="3.40.50.11040">
    <property type="match status" value="1"/>
</dbReference>
<dbReference type="Gene3D" id="3.40.630.30">
    <property type="match status" value="1"/>
</dbReference>
<dbReference type="Gene3D" id="3.40.50.300">
    <property type="entry name" value="P-loop containing nucleotide triphosphate hydrolases"/>
    <property type="match status" value="1"/>
</dbReference>
<dbReference type="Gene3D" id="1.20.120.890">
    <property type="entry name" value="tRNA(Met) cytidine acetyltransferase, tail domain"/>
    <property type="match status" value="1"/>
</dbReference>
<dbReference type="HAMAP" id="MF_01886">
    <property type="entry name" value="tRNA_acetyltr_TmcA"/>
    <property type="match status" value="1"/>
</dbReference>
<dbReference type="InterPro" id="IPR016181">
    <property type="entry name" value="Acyl_CoA_acyltransferase"/>
</dbReference>
<dbReference type="InterPro" id="IPR000182">
    <property type="entry name" value="GNAT_dom"/>
</dbReference>
<dbReference type="InterPro" id="IPR007807">
    <property type="entry name" value="NAT10/TcmA_helicase"/>
</dbReference>
<dbReference type="InterPro" id="IPR027417">
    <property type="entry name" value="P-loop_NTPase"/>
</dbReference>
<dbReference type="InterPro" id="IPR032672">
    <property type="entry name" value="TmcA/NAT10/Kre33"/>
</dbReference>
<dbReference type="InterPro" id="IPR038321">
    <property type="entry name" value="TmcA_C_sf"/>
</dbReference>
<dbReference type="InterPro" id="IPR013562">
    <property type="entry name" value="TmcA_N"/>
</dbReference>
<dbReference type="InterPro" id="IPR033442">
    <property type="entry name" value="TmcA_tRNA_bind"/>
</dbReference>
<dbReference type="InterPro" id="IPR024914">
    <property type="entry name" value="tRNA_acetyltr_TmcA"/>
</dbReference>
<dbReference type="PANTHER" id="PTHR10925">
    <property type="entry name" value="N-ACETYLTRANSFERASE 10"/>
    <property type="match status" value="1"/>
</dbReference>
<dbReference type="PANTHER" id="PTHR10925:SF5">
    <property type="entry name" value="RNA CYTIDINE ACETYLTRANSFERASE"/>
    <property type="match status" value="1"/>
</dbReference>
<dbReference type="Pfam" id="PF13718">
    <property type="entry name" value="GNAT_acetyltr_2"/>
    <property type="match status" value="1"/>
</dbReference>
<dbReference type="Pfam" id="PF05127">
    <property type="entry name" value="NAT10_TcmA_helicase"/>
    <property type="match status" value="1"/>
</dbReference>
<dbReference type="Pfam" id="PF08351">
    <property type="entry name" value="TmcA_N"/>
    <property type="match status" value="1"/>
</dbReference>
<dbReference type="Pfam" id="PF17176">
    <property type="entry name" value="tRNA_bind_3"/>
    <property type="match status" value="1"/>
</dbReference>
<dbReference type="SUPFAM" id="SSF55729">
    <property type="entry name" value="Acyl-CoA N-acyltransferases (Nat)"/>
    <property type="match status" value="1"/>
</dbReference>
<dbReference type="SUPFAM" id="SSF52540">
    <property type="entry name" value="P-loop containing nucleoside triphosphate hydrolases"/>
    <property type="match status" value="1"/>
</dbReference>
<dbReference type="PROSITE" id="PS51186">
    <property type="entry name" value="GNAT"/>
    <property type="match status" value="1"/>
</dbReference>
<sequence>MAELTALHTLTAQMKREGIRRLLVLSGEEGWCFEHTLKLRDALPGDWLWISPRPDAENHCSPSALQTLLGREFRHAVFDARHGFDAAAFAALSGTLKAGSWLVLLLPVWEEWENQPDADSLRWSDCPDPIATPHFVQHLKRVLTADNEAILWRQNQPFSLAHFTPRTDWYPATGAPQPEQQQLLKQLMTMPPGVAAVTAARGRGKSALAGQLISRIAGRAIVTAPAKASTDVLAQFAGEKFRFIAPDALLASDEQADWLVVDEAAAIPAPLLHQLVSRFPRTLLTTTVQGYEGTGRGFLLKFCARFPHLHRFELQQPIRWAQGCPLEKMVSEALVFDDENFTHTPQGNIVISAFEQTLWQSDPETPLKVYQLLSGAHYRTSPLDLRRMMDAPGQHFLQAAGENEIAGALWLVDEGGLSQQLSQAVWAGFRRPRGNLVAQSLAAHGNNPLAATLRGRRVSRIAVHPARQREGTGRQLIAGALQYTQDLDYLSVSFGYTGELWRFWQRCGFVLVRMGNHREASSGCYTAMALLPMSDAGKQLAEREHYRLRRDAQALAQWNGETLPVDPLNDAVLSDDDWLELAGFAFAHRPLLTSLGCLLRLLQTSELALPALRGRLQKNASDAQLCTTLKLSGRKMLLVRQREEAAQALFALNDVRTERLRDRITQWQLFH</sequence>
<comment type="function">
    <text evidence="2 3 6">Catalyzes the formation of N(4)-acetylcytidine (ac(4)C) at the wobble position of tRNA(Met), by using acetyl-CoA as an acetyl donor and ATP (or GTP). It recognizes the wobble base of tRNA(Met), thus distinguishing between tRNA(Met) and the structurally similar tRNA(Ile2) (PubMed:18668122, PubMed:19322199). Could use an RNA helicase motor driven by ATP hydrolysis to deliver the wobble base of tRNA(Met) to the acetyltransferase domain of TmcA (Probable).</text>
</comment>
<comment type="function">
    <text evidence="4">Also functions as a lysine 2-hydroxyisobutyryltransferase to regulate transcription. Can specifically catalyze the 2-hydroxyisobutyrylation (Khib) of the DNA-binding protein H-NS. Hydroxyisobutyrylation of H-NS decreases its DNA-binding activity, promotes the expression of acid-resistance genes and enhances bacterial survival under extreme acid stress.</text>
</comment>
<comment type="catalytic activity">
    <reaction evidence="1 2 3">
        <text>cytidine(34) in elongator tRNA(Met) + acetyl-CoA + ATP + H2O = N(4)-acetylcytidine(34) in elongator tRNA(Met) + ADP + phosphate + CoA + H(+)</text>
        <dbReference type="Rhea" id="RHEA:43788"/>
        <dbReference type="Rhea" id="RHEA-COMP:10693"/>
        <dbReference type="Rhea" id="RHEA-COMP:10694"/>
        <dbReference type="ChEBI" id="CHEBI:15377"/>
        <dbReference type="ChEBI" id="CHEBI:15378"/>
        <dbReference type="ChEBI" id="CHEBI:30616"/>
        <dbReference type="ChEBI" id="CHEBI:43474"/>
        <dbReference type="ChEBI" id="CHEBI:57287"/>
        <dbReference type="ChEBI" id="CHEBI:57288"/>
        <dbReference type="ChEBI" id="CHEBI:74900"/>
        <dbReference type="ChEBI" id="CHEBI:82748"/>
        <dbReference type="ChEBI" id="CHEBI:456216"/>
        <dbReference type="EC" id="2.3.1.193"/>
    </reaction>
</comment>
<comment type="catalytic activity">
    <reaction evidence="4">
        <text>2-hydroxyisobutanoyl-CoA + L-lysyl-[protein] = N(6)-(2-hydroxyisobutanoyl)-L-lysyl-[protein] + CoA + H(+)</text>
        <dbReference type="Rhea" id="RHEA:24180"/>
        <dbReference type="Rhea" id="RHEA-COMP:9752"/>
        <dbReference type="Rhea" id="RHEA-COMP:15921"/>
        <dbReference type="ChEBI" id="CHEBI:15378"/>
        <dbReference type="ChEBI" id="CHEBI:29969"/>
        <dbReference type="ChEBI" id="CHEBI:57287"/>
        <dbReference type="ChEBI" id="CHEBI:131780"/>
        <dbReference type="ChEBI" id="CHEBI:144968"/>
    </reaction>
    <physiologicalReaction direction="left-to-right" evidence="4">
        <dbReference type="Rhea" id="RHEA:24181"/>
    </physiologicalReaction>
</comment>
<comment type="activity regulation">
    <text evidence="2 3 4">ATP/GTP hydrolysis is stimulated by the addition of acetyl-CoA and tRNA(Met). Binding of acetyl-CoA to TmcA activates both ATPase and tRNA-binding activities (PubMed:18668122, PubMed:19322199). ATP promotes the 2-hydroxyisobutyryltransferase activity (PubMed:34903851).</text>
</comment>
<comment type="biophysicochemical properties">
    <kinetics>
        <KM evidence="2">2.93 uM for ATP (in the absence of both acetyl-CoA and tRNA(Met))</KM>
        <KM evidence="2">4.16 uM for ATP (in the presence of both acetyl-CoA and tRNA(Met))</KM>
        <KM evidence="2">117 uM for GTP (in the absence of both acetyl-CoA and tRNA(Met))</KM>
        <KM evidence="2">66.6 uM for GTP (in the presence of both acetyl-CoA and tRNA(Met))</KM>
    </kinetics>
</comment>
<comment type="subcellular location">
    <subcellularLocation>
        <location evidence="1">Cytoplasm</location>
    </subcellularLocation>
</comment>
<comment type="disruption phenotype">
    <text evidence="2 4">Mutants lack the ac(4)C modification, but do not show any growth defects (PubMed:18668122). Knockout mutant shows decreased 2-hydroxyisobutyrylation levels (PubMed:34903851).</text>
</comment>
<comment type="miscellaneous">
    <text evidence="4">467 endogenous Khib candidate sites significantly regulated by TmcA were identified in E.coli using a quantitative proteomics approach.</text>
</comment>
<comment type="similarity">
    <text evidence="1">Belongs to the RNA cytidine acetyltransferase family. TmcA subfamily.</text>
</comment>
<organism>
    <name type="scientific">Escherichia coli (strain K12)</name>
    <dbReference type="NCBI Taxonomy" id="83333"/>
    <lineage>
        <taxon>Bacteria</taxon>
        <taxon>Pseudomonadati</taxon>
        <taxon>Pseudomonadota</taxon>
        <taxon>Gammaproteobacteria</taxon>
        <taxon>Enterobacterales</taxon>
        <taxon>Enterobacteriaceae</taxon>
        <taxon>Escherichia</taxon>
    </lineage>
</organism>